<keyword id="KW-1003">Cell membrane</keyword>
<keyword id="KW-0413">Isomerase</keyword>
<keyword id="KW-0449">Lipoprotein</keyword>
<keyword id="KW-0472">Membrane</keyword>
<keyword id="KW-0564">Palmitate</keyword>
<keyword id="KW-0614">Plasmid</keyword>
<keyword id="KW-0697">Rotamase</keyword>
<keyword id="KW-0732">Signal</keyword>
<name>PRSA_LACLS</name>
<proteinExistence type="inferred from homology"/>
<reference key="1">
    <citation type="journal article" date="1989" name="J. Bacteriol.">
        <title>A maturation protein is essential for production of active forms of Lactococcus lactis SK11 serine proteinase located in or secreted from the cell envelope.</title>
        <authorList>
            <person name="Vos P."/>
            <person name="van Asseldonk M."/>
            <person name="van Jeveren F."/>
            <person name="Siezen R."/>
            <person name="Simons G."/>
            <person name="de Vos W.M."/>
        </authorList>
    </citation>
    <scope>NUCLEOTIDE SEQUENCE [GENOMIC DNA]</scope>
    <scope>POSSIBLE SUBCELLULAR LOCATION</scope>
    <scope>ROLE IN PRTP PROTEASE SECRETION</scope>
    <source>
        <plasmid>pSK111</plasmid>
    </source>
</reference>
<reference key="2">
    <citation type="journal article" date="2006" name="Proc. Natl. Acad. Sci. U.S.A.">
        <title>Comparative genomics of the lactic acid bacteria.</title>
        <authorList>
            <person name="Makarova K.S."/>
            <person name="Slesarev A."/>
            <person name="Wolf Y.I."/>
            <person name="Sorokin A."/>
            <person name="Mirkin B."/>
            <person name="Koonin E.V."/>
            <person name="Pavlov A."/>
            <person name="Pavlova N."/>
            <person name="Karamychev V."/>
            <person name="Polouchine N."/>
            <person name="Shakhova V."/>
            <person name="Grigoriev I."/>
            <person name="Lou Y."/>
            <person name="Rohksar D."/>
            <person name="Lucas S."/>
            <person name="Huang K."/>
            <person name="Goodstein D.M."/>
            <person name="Hawkins T."/>
            <person name="Plengvidhya V."/>
            <person name="Welker D."/>
            <person name="Hughes J."/>
            <person name="Goh Y."/>
            <person name="Benson A."/>
            <person name="Baldwin K."/>
            <person name="Lee J.-H."/>
            <person name="Diaz-Muniz I."/>
            <person name="Dosti B."/>
            <person name="Smeianov V."/>
            <person name="Wechter W."/>
            <person name="Barabote R."/>
            <person name="Lorca G."/>
            <person name="Altermann E."/>
            <person name="Barrangou R."/>
            <person name="Ganesan B."/>
            <person name="Xie Y."/>
            <person name="Rawsthorne H."/>
            <person name="Tamir D."/>
            <person name="Parker C."/>
            <person name="Breidt F."/>
            <person name="Broadbent J.R."/>
            <person name="Hutkins R."/>
            <person name="O'Sullivan D."/>
            <person name="Steele J."/>
            <person name="Unlu G."/>
            <person name="Saier M.H. Jr."/>
            <person name="Klaenhammer T."/>
            <person name="Richardson P."/>
            <person name="Kozyavkin S."/>
            <person name="Weimer B.C."/>
            <person name="Mills D.A."/>
        </authorList>
    </citation>
    <scope>NUCLEOTIDE SEQUENCE [LARGE SCALE GENOMIC DNA]</scope>
    <source>
        <strain>SK11</strain>
        <plasmid>pLACR3</plasmid>
    </source>
</reference>
<reference key="3">
    <citation type="journal article" date="1990" name="Appl. Environ. Microbiol.">
        <title>Insertion elements on lactococcal proteinase plasmids.</title>
        <authorList>
            <person name="Haandrikman A.J."/>
            <person name="van Leeuwen C."/>
            <person name="Kok J."/>
            <person name="Vos P."/>
            <person name="de Vos W.M."/>
            <person name="Venema G."/>
        </authorList>
    </citation>
    <scope>NUCLEOTIDE SEQUENCE [GENOMIC DNA] OF 294-299</scope>
    <source>
        <plasmid>pSK111</plasmid>
    </source>
</reference>
<sequence>MKKKMRLKVLLASTATALLLLSGCQSNQTDQTVATYSGGKVTESSFYKELKQSPTTKTMLANMLIYRALNHAYGKSVSTKTVNDAYDSYKQQYGENFDAFLSQNGFSRSSFKESLRTNFLSEVALKKLKKVSESQLKAAWKTYQPKVTVQHILTSDEDTAKQVISDLAAGKDFAMLAKTDSIDTATKDNGGKISFELNNKTLDATFKDAAYKLKNGDYTQTPVKVTDGYEVIKMINHPAKGTFTSSKKALTASVYAKWSRDSSIMQRVISQVLKNQHVTIKDKDLADALDSYKKLATTN</sequence>
<geneLocation type="plasmid">
    <name>pSK111</name>
</geneLocation>
<geneLocation type="plasmid">
    <name>pLACR3</name>
</geneLocation>
<gene>
    <name type="primary">prsA</name>
    <name type="synonym">prtM</name>
    <name type="ordered locus">LACR_C43</name>
</gene>
<feature type="signal peptide" evidence="1">
    <location>
        <begin position="1"/>
        <end position="23"/>
    </location>
</feature>
<feature type="chain" id="PRO_0000272037" description="Foldase protein PrsA">
    <location>
        <begin position="24"/>
        <end position="299"/>
    </location>
</feature>
<feature type="domain" description="PpiC">
    <location>
        <begin position="144"/>
        <end position="236"/>
    </location>
</feature>
<feature type="lipid moiety-binding region" description="N-palmitoyl cysteine" evidence="1">
    <location>
        <position position="24"/>
    </location>
</feature>
<feature type="lipid moiety-binding region" description="S-diacylglycerol cysteine" evidence="1">
    <location>
        <position position="24"/>
    </location>
</feature>
<evidence type="ECO:0000255" key="1"/>
<evidence type="ECO:0000269" key="2">
    <source>
    </source>
</evidence>
<evidence type="ECO:0000305" key="3"/>
<protein>
    <recommendedName>
        <fullName>Foldase protein PrsA</fullName>
        <ecNumber>5.2.1.8</ecNumber>
    </recommendedName>
    <alternativeName>
        <fullName>Protease maturation protein PrtM</fullName>
    </alternativeName>
</protein>
<comment type="function">
    <text evidence="2">This protein is essential for production of active forms of the serine proteinase located in or secreted from the cell envelope.</text>
</comment>
<comment type="catalytic activity">
    <reaction>
        <text>[protein]-peptidylproline (omega=180) = [protein]-peptidylproline (omega=0)</text>
        <dbReference type="Rhea" id="RHEA:16237"/>
        <dbReference type="Rhea" id="RHEA-COMP:10747"/>
        <dbReference type="Rhea" id="RHEA-COMP:10748"/>
        <dbReference type="ChEBI" id="CHEBI:83833"/>
        <dbReference type="ChEBI" id="CHEBI:83834"/>
        <dbReference type="EC" id="5.2.1.8"/>
    </reaction>
</comment>
<comment type="subcellular location">
    <subcellularLocation>
        <location evidence="3">Cell membrane</location>
        <topology evidence="3">Lipid-anchor</topology>
    </subcellularLocation>
</comment>
<comment type="similarity">
    <text evidence="3">Belongs to the PrsA family.</text>
</comment>
<accession>Q02VE3</accession>
<accession>P14308</accession>
<organism>
    <name type="scientific">Lactococcus lactis subsp. cremoris (strain SK11)</name>
    <dbReference type="NCBI Taxonomy" id="272622"/>
    <lineage>
        <taxon>Bacteria</taxon>
        <taxon>Bacillati</taxon>
        <taxon>Bacillota</taxon>
        <taxon>Bacilli</taxon>
        <taxon>Lactobacillales</taxon>
        <taxon>Streptococcaceae</taxon>
        <taxon>Lactococcus</taxon>
        <taxon>Lactococcus cremoris subsp. cremoris</taxon>
    </lineage>
</organism>
<dbReference type="EC" id="5.2.1.8"/>
<dbReference type="EMBL" id="J04962">
    <property type="protein sequence ID" value="AAA03532.1"/>
    <property type="molecule type" value="Unassigned_DNA"/>
</dbReference>
<dbReference type="EMBL" id="CP000428">
    <property type="protein sequence ID" value="ABJ74079.1"/>
    <property type="molecule type" value="Genomic_DNA"/>
</dbReference>
<dbReference type="EMBL" id="M37395">
    <property type="protein sequence ID" value="AAA25209.1"/>
    <property type="molecule type" value="Genomic_DNA"/>
</dbReference>
<dbReference type="PIR" id="A32314">
    <property type="entry name" value="A32313"/>
</dbReference>
<dbReference type="RefSeq" id="WP_011669080.1">
    <property type="nucleotide sequence ID" value="NC_008505.1"/>
</dbReference>
<dbReference type="SMR" id="Q02VE3"/>
<dbReference type="MEROPS" id="X15.001"/>
<dbReference type="KEGG" id="llc:LACR_C43"/>
<dbReference type="HOGENOM" id="CLU_034646_6_1_9"/>
<dbReference type="Proteomes" id="UP000000240">
    <property type="component" value="Plasmid pLACR3"/>
</dbReference>
<dbReference type="GO" id="GO:0005886">
    <property type="term" value="C:plasma membrane"/>
    <property type="evidence" value="ECO:0007669"/>
    <property type="project" value="UniProtKB-SubCell"/>
</dbReference>
<dbReference type="GO" id="GO:0003755">
    <property type="term" value="F:peptidyl-prolyl cis-trans isomerase activity"/>
    <property type="evidence" value="ECO:0007669"/>
    <property type="project" value="UniProtKB-UniRule"/>
</dbReference>
<dbReference type="GO" id="GO:0006457">
    <property type="term" value="P:protein folding"/>
    <property type="evidence" value="ECO:0007669"/>
    <property type="project" value="UniProtKB-UniRule"/>
</dbReference>
<dbReference type="Gene3D" id="3.10.50.40">
    <property type="match status" value="1"/>
</dbReference>
<dbReference type="HAMAP" id="MF_01145">
    <property type="entry name" value="Foldase_PrsA"/>
    <property type="match status" value="1"/>
</dbReference>
<dbReference type="InterPro" id="IPR023059">
    <property type="entry name" value="Foldase_PrsA"/>
</dbReference>
<dbReference type="InterPro" id="IPR046357">
    <property type="entry name" value="PPIase_dom_sf"/>
</dbReference>
<dbReference type="InterPro" id="IPR000297">
    <property type="entry name" value="PPIase_PpiC"/>
</dbReference>
<dbReference type="InterPro" id="IPR023058">
    <property type="entry name" value="PPIase_PpiC_CS"/>
</dbReference>
<dbReference type="InterPro" id="IPR050245">
    <property type="entry name" value="PrsA_foldase"/>
</dbReference>
<dbReference type="InterPro" id="IPR027304">
    <property type="entry name" value="Trigger_fact/SurA_dom_sf"/>
</dbReference>
<dbReference type="NCBIfam" id="NF003356">
    <property type="entry name" value="PRK04405.1"/>
    <property type="match status" value="1"/>
</dbReference>
<dbReference type="PANTHER" id="PTHR47245:SF1">
    <property type="entry name" value="FOLDASE PROTEIN PRSA"/>
    <property type="match status" value="1"/>
</dbReference>
<dbReference type="PANTHER" id="PTHR47245">
    <property type="entry name" value="PEPTIDYLPROLYL ISOMERASE"/>
    <property type="match status" value="1"/>
</dbReference>
<dbReference type="Pfam" id="PF00639">
    <property type="entry name" value="Rotamase"/>
    <property type="match status" value="1"/>
</dbReference>
<dbReference type="SUPFAM" id="SSF54534">
    <property type="entry name" value="FKBP-like"/>
    <property type="match status" value="1"/>
</dbReference>
<dbReference type="SUPFAM" id="SSF109998">
    <property type="entry name" value="Triger factor/SurA peptide-binding domain-like"/>
    <property type="match status" value="1"/>
</dbReference>
<dbReference type="PROSITE" id="PS01096">
    <property type="entry name" value="PPIC_PPIASE_1"/>
    <property type="match status" value="1"/>
</dbReference>
<dbReference type="PROSITE" id="PS50198">
    <property type="entry name" value="PPIC_PPIASE_2"/>
    <property type="match status" value="1"/>
</dbReference>
<dbReference type="PROSITE" id="PS51257">
    <property type="entry name" value="PROKAR_LIPOPROTEIN"/>
    <property type="match status" value="1"/>
</dbReference>